<reference key="1">
    <citation type="journal article" date="2006" name="Proc. Natl. Acad. Sci. U.S.A.">
        <title>The complete genome sequence of Lactobacillus bulgaricus reveals extensive and ongoing reductive evolution.</title>
        <authorList>
            <person name="van de Guchte M."/>
            <person name="Penaud S."/>
            <person name="Grimaldi C."/>
            <person name="Barbe V."/>
            <person name="Bryson K."/>
            <person name="Nicolas P."/>
            <person name="Robert C."/>
            <person name="Oztas S."/>
            <person name="Mangenot S."/>
            <person name="Couloux A."/>
            <person name="Loux V."/>
            <person name="Dervyn R."/>
            <person name="Bossy R."/>
            <person name="Bolotin A."/>
            <person name="Batto J.-M."/>
            <person name="Walunas T."/>
            <person name="Gibrat J.-F."/>
            <person name="Bessieres P."/>
            <person name="Weissenbach J."/>
            <person name="Ehrlich S.D."/>
            <person name="Maguin E."/>
        </authorList>
    </citation>
    <scope>NUCLEOTIDE SEQUENCE [LARGE SCALE GENOMIC DNA]</scope>
    <source>
        <strain>ATCC 11842 / DSM 20081 / BCRC 10696 / JCM 1002 / NBRC 13953 / NCIMB 11778 / NCTC 12712 / WDCM 00102 / Lb 14</strain>
    </source>
</reference>
<accession>Q1GBJ4</accession>
<sequence>MARIAGVDLPRDKRIVIALTYIYGIGEHTAQEICAAAGVSEDVRSKDLTPEQQEKLRAEVDKYRVEGDLRREVSMNIKRLVDIGSYRGIRHRRGLPVRGQNTKNNARTRKGAKRSR</sequence>
<protein>
    <recommendedName>
        <fullName evidence="1">Small ribosomal subunit protein uS13</fullName>
    </recommendedName>
    <alternativeName>
        <fullName evidence="3">30S ribosomal protein S13</fullName>
    </alternativeName>
</protein>
<evidence type="ECO:0000255" key="1">
    <source>
        <dbReference type="HAMAP-Rule" id="MF_01315"/>
    </source>
</evidence>
<evidence type="ECO:0000256" key="2">
    <source>
        <dbReference type="SAM" id="MobiDB-lite"/>
    </source>
</evidence>
<evidence type="ECO:0000305" key="3"/>
<feature type="chain" id="PRO_0000306627" description="Small ribosomal subunit protein uS13">
    <location>
        <begin position="1"/>
        <end position="116"/>
    </location>
</feature>
<feature type="region of interest" description="Disordered" evidence="2">
    <location>
        <begin position="92"/>
        <end position="116"/>
    </location>
</feature>
<feature type="compositionally biased region" description="Basic residues" evidence="2">
    <location>
        <begin position="106"/>
        <end position="116"/>
    </location>
</feature>
<gene>
    <name evidence="1" type="primary">rpsM</name>
    <name type="ordered locus">Ldb0420</name>
</gene>
<dbReference type="EMBL" id="CR954253">
    <property type="protein sequence ID" value="CAI97255.1"/>
    <property type="molecule type" value="Genomic_DNA"/>
</dbReference>
<dbReference type="RefSeq" id="WP_003620856.1">
    <property type="nucleotide sequence ID" value="NZ_JQAV01000001.1"/>
</dbReference>
<dbReference type="SMR" id="Q1GBJ4"/>
<dbReference type="STRING" id="390333.Ldb0420"/>
<dbReference type="KEGG" id="ldb:Ldb0420"/>
<dbReference type="PATRIC" id="fig|390333.13.peg.372"/>
<dbReference type="eggNOG" id="COG0099">
    <property type="taxonomic scope" value="Bacteria"/>
</dbReference>
<dbReference type="HOGENOM" id="CLU_103849_1_1_9"/>
<dbReference type="BioCyc" id="LDEL390333:LDB_RS01785-MONOMER"/>
<dbReference type="Proteomes" id="UP000001259">
    <property type="component" value="Chromosome"/>
</dbReference>
<dbReference type="GO" id="GO:0005829">
    <property type="term" value="C:cytosol"/>
    <property type="evidence" value="ECO:0007669"/>
    <property type="project" value="TreeGrafter"/>
</dbReference>
<dbReference type="GO" id="GO:0015935">
    <property type="term" value="C:small ribosomal subunit"/>
    <property type="evidence" value="ECO:0007669"/>
    <property type="project" value="TreeGrafter"/>
</dbReference>
<dbReference type="GO" id="GO:0019843">
    <property type="term" value="F:rRNA binding"/>
    <property type="evidence" value="ECO:0007669"/>
    <property type="project" value="UniProtKB-UniRule"/>
</dbReference>
<dbReference type="GO" id="GO:0003735">
    <property type="term" value="F:structural constituent of ribosome"/>
    <property type="evidence" value="ECO:0007669"/>
    <property type="project" value="InterPro"/>
</dbReference>
<dbReference type="GO" id="GO:0000049">
    <property type="term" value="F:tRNA binding"/>
    <property type="evidence" value="ECO:0007669"/>
    <property type="project" value="UniProtKB-UniRule"/>
</dbReference>
<dbReference type="GO" id="GO:0006412">
    <property type="term" value="P:translation"/>
    <property type="evidence" value="ECO:0007669"/>
    <property type="project" value="UniProtKB-UniRule"/>
</dbReference>
<dbReference type="FunFam" id="1.10.8.50:FF:000001">
    <property type="entry name" value="30S ribosomal protein S13"/>
    <property type="match status" value="1"/>
</dbReference>
<dbReference type="FunFam" id="4.10.910.10:FF:000001">
    <property type="entry name" value="30S ribosomal protein S13"/>
    <property type="match status" value="1"/>
</dbReference>
<dbReference type="Gene3D" id="1.10.8.50">
    <property type="match status" value="1"/>
</dbReference>
<dbReference type="Gene3D" id="4.10.910.10">
    <property type="entry name" value="30s ribosomal protein s13, domain 2"/>
    <property type="match status" value="1"/>
</dbReference>
<dbReference type="HAMAP" id="MF_01315">
    <property type="entry name" value="Ribosomal_uS13"/>
    <property type="match status" value="1"/>
</dbReference>
<dbReference type="InterPro" id="IPR027437">
    <property type="entry name" value="Rbsml_uS13_C"/>
</dbReference>
<dbReference type="InterPro" id="IPR001892">
    <property type="entry name" value="Ribosomal_uS13"/>
</dbReference>
<dbReference type="InterPro" id="IPR010979">
    <property type="entry name" value="Ribosomal_uS13-like_H2TH"/>
</dbReference>
<dbReference type="InterPro" id="IPR019980">
    <property type="entry name" value="Ribosomal_uS13_bac-type"/>
</dbReference>
<dbReference type="InterPro" id="IPR018269">
    <property type="entry name" value="Ribosomal_uS13_CS"/>
</dbReference>
<dbReference type="NCBIfam" id="TIGR03631">
    <property type="entry name" value="uS13_bact"/>
    <property type="match status" value="1"/>
</dbReference>
<dbReference type="PANTHER" id="PTHR10871">
    <property type="entry name" value="30S RIBOSOMAL PROTEIN S13/40S RIBOSOMAL PROTEIN S18"/>
    <property type="match status" value="1"/>
</dbReference>
<dbReference type="PANTHER" id="PTHR10871:SF1">
    <property type="entry name" value="SMALL RIBOSOMAL SUBUNIT PROTEIN US13M"/>
    <property type="match status" value="1"/>
</dbReference>
<dbReference type="Pfam" id="PF00416">
    <property type="entry name" value="Ribosomal_S13"/>
    <property type="match status" value="1"/>
</dbReference>
<dbReference type="PIRSF" id="PIRSF002134">
    <property type="entry name" value="Ribosomal_S13"/>
    <property type="match status" value="1"/>
</dbReference>
<dbReference type="SUPFAM" id="SSF46946">
    <property type="entry name" value="S13-like H2TH domain"/>
    <property type="match status" value="1"/>
</dbReference>
<dbReference type="PROSITE" id="PS00646">
    <property type="entry name" value="RIBOSOMAL_S13_1"/>
    <property type="match status" value="1"/>
</dbReference>
<dbReference type="PROSITE" id="PS50159">
    <property type="entry name" value="RIBOSOMAL_S13_2"/>
    <property type="match status" value="1"/>
</dbReference>
<proteinExistence type="inferred from homology"/>
<organism>
    <name type="scientific">Lactobacillus delbrueckii subsp. bulgaricus (strain ATCC 11842 / DSM 20081 / BCRC 10696 / JCM 1002 / NBRC 13953 / NCIMB 11778 / NCTC 12712 / WDCM 00102 / Lb 14)</name>
    <dbReference type="NCBI Taxonomy" id="390333"/>
    <lineage>
        <taxon>Bacteria</taxon>
        <taxon>Bacillati</taxon>
        <taxon>Bacillota</taxon>
        <taxon>Bacilli</taxon>
        <taxon>Lactobacillales</taxon>
        <taxon>Lactobacillaceae</taxon>
        <taxon>Lactobacillus</taxon>
    </lineage>
</organism>
<name>RS13_LACDA</name>
<comment type="function">
    <text evidence="1">Located at the top of the head of the 30S subunit, it contacts several helices of the 16S rRNA. In the 70S ribosome it contacts the 23S rRNA (bridge B1a) and protein L5 of the 50S subunit (bridge B1b), connecting the 2 subunits; these bridges are implicated in subunit movement. Contacts the tRNAs in the A and P-sites.</text>
</comment>
<comment type="subunit">
    <text evidence="1">Part of the 30S ribosomal subunit. Forms a loose heterodimer with protein S19. Forms two bridges to the 50S subunit in the 70S ribosome.</text>
</comment>
<comment type="similarity">
    <text evidence="1">Belongs to the universal ribosomal protein uS13 family.</text>
</comment>
<keyword id="KW-1185">Reference proteome</keyword>
<keyword id="KW-0687">Ribonucleoprotein</keyword>
<keyword id="KW-0689">Ribosomal protein</keyword>
<keyword id="KW-0694">RNA-binding</keyword>
<keyword id="KW-0699">rRNA-binding</keyword>
<keyword id="KW-0820">tRNA-binding</keyword>